<proteinExistence type="evidence at transcript level"/>
<gene>
    <name type="primary">HBG1</name>
</gene>
<protein>
    <recommendedName>
        <fullName>Hemoglobin subunit gamma-1</fullName>
    </recommendedName>
    <alternativeName>
        <fullName>Gamma-1-globin</fullName>
    </alternativeName>
    <alternativeName>
        <fullName>Hemoglobin gamma-1 chain</fullName>
    </alternativeName>
</protein>
<reference key="1">
    <citation type="journal article" date="1997" name="Gene">
        <title>Dynamics of regulatory evolution in primate beta-globin gene clusters: cis-mediated acquisition of simian gamma fetal expression patterns.</title>
        <authorList>
            <person name="Chiu C.-H."/>
            <person name="Schneider H."/>
            <person name="Slightom J.L."/>
            <person name="Gumucio D.L."/>
            <person name="Goodman M."/>
        </authorList>
    </citation>
    <scope>NUCLEOTIDE SEQUENCE [GENOMIC DNA]</scope>
</reference>
<accession>Q9GLX4</accession>
<name>HBG1_PLEMO</name>
<organism>
    <name type="scientific">Plecturocebus moloch</name>
    <name type="common">Dusky titi monkey</name>
    <name type="synonym">Callicebus moloch</name>
    <dbReference type="NCBI Taxonomy" id="9523"/>
    <lineage>
        <taxon>Eukaryota</taxon>
        <taxon>Metazoa</taxon>
        <taxon>Chordata</taxon>
        <taxon>Craniata</taxon>
        <taxon>Vertebrata</taxon>
        <taxon>Euteleostomi</taxon>
        <taxon>Mammalia</taxon>
        <taxon>Eutheria</taxon>
        <taxon>Euarchontoglires</taxon>
        <taxon>Primates</taxon>
        <taxon>Haplorrhini</taxon>
        <taxon>Platyrrhini</taxon>
        <taxon>Pitheciidae</taxon>
        <taxon>Callicebinae</taxon>
        <taxon>Plecturocebus</taxon>
    </lineage>
</organism>
<dbReference type="EMBL" id="AF016986">
    <property type="protein sequence ID" value="AAG33928.1"/>
    <property type="molecule type" value="Genomic_DNA"/>
</dbReference>
<dbReference type="SMR" id="Q9GLX4"/>
<dbReference type="GO" id="GO:0072562">
    <property type="term" value="C:blood microparticle"/>
    <property type="evidence" value="ECO:0007669"/>
    <property type="project" value="TreeGrafter"/>
</dbReference>
<dbReference type="GO" id="GO:0031838">
    <property type="term" value="C:haptoglobin-hemoglobin complex"/>
    <property type="evidence" value="ECO:0007669"/>
    <property type="project" value="TreeGrafter"/>
</dbReference>
<dbReference type="GO" id="GO:0005833">
    <property type="term" value="C:hemoglobin complex"/>
    <property type="evidence" value="ECO:0007669"/>
    <property type="project" value="InterPro"/>
</dbReference>
<dbReference type="GO" id="GO:0031720">
    <property type="term" value="F:haptoglobin binding"/>
    <property type="evidence" value="ECO:0007669"/>
    <property type="project" value="TreeGrafter"/>
</dbReference>
<dbReference type="GO" id="GO:0020037">
    <property type="term" value="F:heme binding"/>
    <property type="evidence" value="ECO:0007669"/>
    <property type="project" value="InterPro"/>
</dbReference>
<dbReference type="GO" id="GO:0031721">
    <property type="term" value="F:hemoglobin alpha binding"/>
    <property type="evidence" value="ECO:0007669"/>
    <property type="project" value="TreeGrafter"/>
</dbReference>
<dbReference type="GO" id="GO:0046872">
    <property type="term" value="F:metal ion binding"/>
    <property type="evidence" value="ECO:0007669"/>
    <property type="project" value="UniProtKB-KW"/>
</dbReference>
<dbReference type="GO" id="GO:0043177">
    <property type="term" value="F:organic acid binding"/>
    <property type="evidence" value="ECO:0007669"/>
    <property type="project" value="TreeGrafter"/>
</dbReference>
<dbReference type="GO" id="GO:0019825">
    <property type="term" value="F:oxygen binding"/>
    <property type="evidence" value="ECO:0007669"/>
    <property type="project" value="InterPro"/>
</dbReference>
<dbReference type="GO" id="GO:0005344">
    <property type="term" value="F:oxygen carrier activity"/>
    <property type="evidence" value="ECO:0007669"/>
    <property type="project" value="UniProtKB-KW"/>
</dbReference>
<dbReference type="GO" id="GO:0004601">
    <property type="term" value="F:peroxidase activity"/>
    <property type="evidence" value="ECO:0007669"/>
    <property type="project" value="TreeGrafter"/>
</dbReference>
<dbReference type="GO" id="GO:0042744">
    <property type="term" value="P:hydrogen peroxide catabolic process"/>
    <property type="evidence" value="ECO:0007669"/>
    <property type="project" value="TreeGrafter"/>
</dbReference>
<dbReference type="CDD" id="cd08925">
    <property type="entry name" value="Hb-beta-like"/>
    <property type="match status" value="1"/>
</dbReference>
<dbReference type="FunFam" id="1.10.490.10:FF:000001">
    <property type="entry name" value="Hemoglobin subunit beta"/>
    <property type="match status" value="1"/>
</dbReference>
<dbReference type="Gene3D" id="1.10.490.10">
    <property type="entry name" value="Globins"/>
    <property type="match status" value="1"/>
</dbReference>
<dbReference type="InterPro" id="IPR000971">
    <property type="entry name" value="Globin"/>
</dbReference>
<dbReference type="InterPro" id="IPR009050">
    <property type="entry name" value="Globin-like_sf"/>
</dbReference>
<dbReference type="InterPro" id="IPR012292">
    <property type="entry name" value="Globin/Proto"/>
</dbReference>
<dbReference type="InterPro" id="IPR002337">
    <property type="entry name" value="Hemoglobin_b"/>
</dbReference>
<dbReference type="InterPro" id="IPR050056">
    <property type="entry name" value="Hemoglobin_oxygen_transport"/>
</dbReference>
<dbReference type="PANTHER" id="PTHR11442">
    <property type="entry name" value="HEMOGLOBIN FAMILY MEMBER"/>
    <property type="match status" value="1"/>
</dbReference>
<dbReference type="PANTHER" id="PTHR11442:SF52">
    <property type="entry name" value="HEMOGLOBIN SUBUNIT GAMMA-1"/>
    <property type="match status" value="1"/>
</dbReference>
<dbReference type="Pfam" id="PF00042">
    <property type="entry name" value="Globin"/>
    <property type="match status" value="1"/>
</dbReference>
<dbReference type="PRINTS" id="PR00814">
    <property type="entry name" value="BETAHAEM"/>
</dbReference>
<dbReference type="SUPFAM" id="SSF46458">
    <property type="entry name" value="Globin-like"/>
    <property type="match status" value="1"/>
</dbReference>
<dbReference type="PROSITE" id="PS01033">
    <property type="entry name" value="GLOBIN"/>
    <property type="match status" value="1"/>
</dbReference>
<comment type="function">
    <text evidence="2">Gamma chains make up the fetal hemoglobin F, in combination with alpha chains.</text>
</comment>
<comment type="subunit">
    <text evidence="2">Heterotetramer of two alpha chains and two gamma chains in fetal hemoglobin (Hb F).</text>
</comment>
<comment type="tissue specificity">
    <text>Red blood cells.</text>
</comment>
<comment type="similarity">
    <text evidence="3">Belongs to the globin family.</text>
</comment>
<evidence type="ECO:0000250" key="1">
    <source>
        <dbReference type="UniProtKB" id="P68871"/>
    </source>
</evidence>
<evidence type="ECO:0000250" key="2">
    <source>
        <dbReference type="UniProtKB" id="P69891"/>
    </source>
</evidence>
<evidence type="ECO:0000255" key="3">
    <source>
        <dbReference type="PROSITE-ProRule" id="PRU00238"/>
    </source>
</evidence>
<feature type="chain" id="PRO_0000053240" description="Hemoglobin subunit gamma-1">
    <location>
        <begin position="1"/>
        <end position="147"/>
    </location>
</feature>
<feature type="domain" description="Globin" evidence="3">
    <location>
        <begin position="3"/>
        <end position="147"/>
    </location>
</feature>
<feature type="binding site" description="distal binding residue" evidence="3">
    <location>
        <position position="64"/>
    </location>
    <ligand>
        <name>heme b</name>
        <dbReference type="ChEBI" id="CHEBI:60344"/>
    </ligand>
    <ligandPart>
        <name>Fe</name>
        <dbReference type="ChEBI" id="CHEBI:18248"/>
    </ligandPart>
</feature>
<feature type="binding site" description="proximal binding residue" evidence="3">
    <location>
        <position position="93"/>
    </location>
    <ligand>
        <name>heme b</name>
        <dbReference type="ChEBI" id="CHEBI:60344"/>
    </ligand>
    <ligandPart>
        <name>Fe</name>
        <dbReference type="ChEBI" id="CHEBI:18248"/>
    </ligandPart>
</feature>
<feature type="modified residue" description="Phosphothreonine" evidence="1">
    <location>
        <position position="13"/>
    </location>
</feature>
<feature type="modified residue" description="Phosphoserine" evidence="2">
    <location>
        <position position="45"/>
    </location>
</feature>
<feature type="modified residue" description="Phosphoserine" evidence="2">
    <location>
        <position position="51"/>
    </location>
</feature>
<feature type="modified residue" description="Phosphoserine" evidence="2">
    <location>
        <position position="53"/>
    </location>
</feature>
<feature type="modified residue" description="N6-acetyllysine" evidence="1">
    <location>
        <position position="60"/>
    </location>
</feature>
<feature type="modified residue" description="N6-acetyllysine" evidence="1">
    <location>
        <position position="83"/>
    </location>
</feature>
<feature type="modified residue" description="S-nitrosocysteine" evidence="1">
    <location>
        <position position="94"/>
    </location>
</feature>
<feature type="modified residue" description="Phosphoserine" evidence="2">
    <location>
        <position position="140"/>
    </location>
</feature>
<keyword id="KW-0007">Acetylation</keyword>
<keyword id="KW-0349">Heme</keyword>
<keyword id="KW-0408">Iron</keyword>
<keyword id="KW-0479">Metal-binding</keyword>
<keyword id="KW-0561">Oxygen transport</keyword>
<keyword id="KW-0597">Phosphoprotein</keyword>
<keyword id="KW-0702">S-nitrosylation</keyword>
<keyword id="KW-0813">Transport</keyword>
<sequence>MSNFTAEDKAAITSLWGKVNVEDAGGETLGRLLVVYPWTQRFFDSFGSLSSPSAIMGNPKVKAHGVKVLTSLGEAIKNLDDLKGTFDQLSELHCDKLHVDPENFRLLGNVLVTVLAILHGKEFTPEVQASRQKMVAGVASALGSRYH</sequence>